<proteinExistence type="inferred from homology"/>
<organism>
    <name type="scientific">Bacillus anthracis (strain A0248)</name>
    <dbReference type="NCBI Taxonomy" id="592021"/>
    <lineage>
        <taxon>Bacteria</taxon>
        <taxon>Bacillati</taxon>
        <taxon>Bacillota</taxon>
        <taxon>Bacilli</taxon>
        <taxon>Bacillales</taxon>
        <taxon>Bacillaceae</taxon>
        <taxon>Bacillus</taxon>
        <taxon>Bacillus cereus group</taxon>
    </lineage>
</organism>
<dbReference type="EC" id="2.4.2.22" evidence="1"/>
<dbReference type="EMBL" id="CP001598">
    <property type="protein sequence ID" value="ACQ49770.1"/>
    <property type="molecule type" value="Genomic_DNA"/>
</dbReference>
<dbReference type="RefSeq" id="WP_000866485.1">
    <property type="nucleotide sequence ID" value="NC_012659.1"/>
</dbReference>
<dbReference type="SMR" id="C3P5T8"/>
<dbReference type="KEGG" id="bai:BAA_1660"/>
<dbReference type="HOGENOM" id="CLU_099015_0_0_9"/>
<dbReference type="UniPathway" id="UPA00602">
    <property type="reaction ID" value="UER00658"/>
</dbReference>
<dbReference type="GO" id="GO:0005737">
    <property type="term" value="C:cytoplasm"/>
    <property type="evidence" value="ECO:0007669"/>
    <property type="project" value="UniProtKB-SubCell"/>
</dbReference>
<dbReference type="GO" id="GO:0000310">
    <property type="term" value="F:xanthine phosphoribosyltransferase activity"/>
    <property type="evidence" value="ECO:0007669"/>
    <property type="project" value="UniProtKB-UniRule"/>
</dbReference>
<dbReference type="GO" id="GO:0006166">
    <property type="term" value="P:purine ribonucleoside salvage"/>
    <property type="evidence" value="ECO:0007669"/>
    <property type="project" value="UniProtKB-KW"/>
</dbReference>
<dbReference type="GO" id="GO:0046110">
    <property type="term" value="P:xanthine metabolic process"/>
    <property type="evidence" value="ECO:0007669"/>
    <property type="project" value="InterPro"/>
</dbReference>
<dbReference type="GO" id="GO:0032265">
    <property type="term" value="P:XMP salvage"/>
    <property type="evidence" value="ECO:0007669"/>
    <property type="project" value="UniProtKB-UniRule"/>
</dbReference>
<dbReference type="CDD" id="cd06223">
    <property type="entry name" value="PRTases_typeI"/>
    <property type="match status" value="1"/>
</dbReference>
<dbReference type="Gene3D" id="3.40.50.2020">
    <property type="match status" value="1"/>
</dbReference>
<dbReference type="HAMAP" id="MF_01184">
    <property type="entry name" value="XPRTase"/>
    <property type="match status" value="1"/>
</dbReference>
<dbReference type="InterPro" id="IPR000836">
    <property type="entry name" value="PRibTrfase_dom"/>
</dbReference>
<dbReference type="InterPro" id="IPR029057">
    <property type="entry name" value="PRTase-like"/>
</dbReference>
<dbReference type="InterPro" id="IPR050118">
    <property type="entry name" value="Pur/Pyrimidine_PRTase"/>
</dbReference>
<dbReference type="InterPro" id="IPR010079">
    <property type="entry name" value="Xanthine_PRibTrfase"/>
</dbReference>
<dbReference type="NCBIfam" id="NF006671">
    <property type="entry name" value="PRK09219.1"/>
    <property type="match status" value="1"/>
</dbReference>
<dbReference type="NCBIfam" id="TIGR01744">
    <property type="entry name" value="XPRTase"/>
    <property type="match status" value="1"/>
</dbReference>
<dbReference type="PANTHER" id="PTHR43864">
    <property type="entry name" value="HYPOXANTHINE/GUANINE PHOSPHORIBOSYLTRANSFERASE"/>
    <property type="match status" value="1"/>
</dbReference>
<dbReference type="PANTHER" id="PTHR43864:SF1">
    <property type="entry name" value="XANTHINE PHOSPHORIBOSYLTRANSFERASE"/>
    <property type="match status" value="1"/>
</dbReference>
<dbReference type="Pfam" id="PF00156">
    <property type="entry name" value="Pribosyltran"/>
    <property type="match status" value="1"/>
</dbReference>
<dbReference type="SUPFAM" id="SSF53271">
    <property type="entry name" value="PRTase-like"/>
    <property type="match status" value="1"/>
</dbReference>
<reference key="1">
    <citation type="submission" date="2009-04" db="EMBL/GenBank/DDBJ databases">
        <title>Genome sequence of Bacillus anthracis A0248.</title>
        <authorList>
            <person name="Dodson R.J."/>
            <person name="Munk A.C."/>
            <person name="Bruce D."/>
            <person name="Detter C."/>
            <person name="Tapia R."/>
            <person name="Sutton G."/>
            <person name="Sims D."/>
            <person name="Brettin T."/>
        </authorList>
    </citation>
    <scope>NUCLEOTIDE SEQUENCE [LARGE SCALE GENOMIC DNA]</scope>
    <source>
        <strain>A0248</strain>
    </source>
</reference>
<protein>
    <recommendedName>
        <fullName evidence="1">Xanthine phosphoribosyltransferase</fullName>
        <shortName evidence="1">XPRTase</shortName>
        <ecNumber evidence="1">2.4.2.22</ecNumber>
    </recommendedName>
</protein>
<accession>C3P5T8</accession>
<feature type="chain" id="PRO_1000164443" description="Xanthine phosphoribosyltransferase">
    <location>
        <begin position="1"/>
        <end position="197"/>
    </location>
</feature>
<feature type="binding site" evidence="1">
    <location>
        <position position="20"/>
    </location>
    <ligand>
        <name>xanthine</name>
        <dbReference type="ChEBI" id="CHEBI:17712"/>
    </ligand>
</feature>
<feature type="binding site" evidence="1">
    <location>
        <position position="27"/>
    </location>
    <ligand>
        <name>xanthine</name>
        <dbReference type="ChEBI" id="CHEBI:17712"/>
    </ligand>
</feature>
<feature type="binding site" evidence="1">
    <location>
        <begin position="128"/>
        <end position="132"/>
    </location>
    <ligand>
        <name>5-phospho-alpha-D-ribose 1-diphosphate</name>
        <dbReference type="ChEBI" id="CHEBI:58017"/>
    </ligand>
</feature>
<feature type="binding site" evidence="1">
    <location>
        <position position="156"/>
    </location>
    <ligand>
        <name>xanthine</name>
        <dbReference type="ChEBI" id="CHEBI:17712"/>
    </ligand>
</feature>
<name>XPT_BACAA</name>
<comment type="function">
    <text evidence="1">Converts the preformed base xanthine, a product of nucleic acid breakdown, to xanthosine 5'-monophosphate (XMP), so it can be reused for RNA or DNA synthesis.</text>
</comment>
<comment type="catalytic activity">
    <reaction evidence="1">
        <text>XMP + diphosphate = xanthine + 5-phospho-alpha-D-ribose 1-diphosphate</text>
        <dbReference type="Rhea" id="RHEA:10800"/>
        <dbReference type="ChEBI" id="CHEBI:17712"/>
        <dbReference type="ChEBI" id="CHEBI:33019"/>
        <dbReference type="ChEBI" id="CHEBI:57464"/>
        <dbReference type="ChEBI" id="CHEBI:58017"/>
        <dbReference type="EC" id="2.4.2.22"/>
    </reaction>
</comment>
<comment type="pathway">
    <text evidence="1">Purine metabolism; XMP biosynthesis via salvage pathway; XMP from xanthine: step 1/1.</text>
</comment>
<comment type="subunit">
    <text evidence="1">Homodimer.</text>
</comment>
<comment type="subcellular location">
    <subcellularLocation>
        <location evidence="1">Cytoplasm</location>
    </subcellularLocation>
</comment>
<comment type="similarity">
    <text evidence="1">Belongs to the purine/pyrimidine phosphoribosyltransferase family. Xpt subfamily.</text>
</comment>
<gene>
    <name evidence="1" type="primary">xpt</name>
    <name type="ordered locus">BAA_1660</name>
</gene>
<keyword id="KW-0963">Cytoplasm</keyword>
<keyword id="KW-0328">Glycosyltransferase</keyword>
<keyword id="KW-0660">Purine salvage</keyword>
<keyword id="KW-0808">Transferase</keyword>
<sequence>MKVLQEKILNEGKVLSGDVLKVDAFLNHQIDPVLMQEIGKEFAKRFKEENITKIVTIESSGIAPAVMAALELGVKVIFARKRKSLTLQDNMYVANVYSFTKQETNEISLSRNHIDESDRVLIIDDFLANGQAALGLMSLVEQAGASIAGIGIVIEKAFQDGGKKLREQGIRVESLAEIASLDNNAVTFVQQETAEVK</sequence>
<evidence type="ECO:0000255" key="1">
    <source>
        <dbReference type="HAMAP-Rule" id="MF_01184"/>
    </source>
</evidence>